<organism>
    <name type="scientific">Pseudomonas syringae pv. syringae (strain B728a)</name>
    <dbReference type="NCBI Taxonomy" id="205918"/>
    <lineage>
        <taxon>Bacteria</taxon>
        <taxon>Pseudomonadati</taxon>
        <taxon>Pseudomonadota</taxon>
        <taxon>Gammaproteobacteria</taxon>
        <taxon>Pseudomonadales</taxon>
        <taxon>Pseudomonadaceae</taxon>
        <taxon>Pseudomonas</taxon>
        <taxon>Pseudomonas syringae</taxon>
    </lineage>
</organism>
<evidence type="ECO:0000255" key="1">
    <source>
        <dbReference type="HAMAP-Rule" id="MF_01841"/>
    </source>
</evidence>
<dbReference type="EC" id="3.5.3.12" evidence="1"/>
<dbReference type="EMBL" id="CP000075">
    <property type="protein sequence ID" value="AAY39959.1"/>
    <property type="molecule type" value="Genomic_DNA"/>
</dbReference>
<dbReference type="RefSeq" id="WP_011269318.1">
    <property type="nucleotide sequence ID" value="NC_007005.1"/>
</dbReference>
<dbReference type="RefSeq" id="YP_237997.1">
    <property type="nucleotide sequence ID" value="NC_007005.1"/>
</dbReference>
<dbReference type="SMR" id="Q4ZLL3"/>
<dbReference type="STRING" id="205918.Psyr_4932"/>
<dbReference type="KEGG" id="psb:Psyr_4932"/>
<dbReference type="PATRIC" id="fig|205918.7.peg.5096"/>
<dbReference type="eggNOG" id="COG2957">
    <property type="taxonomic scope" value="Bacteria"/>
</dbReference>
<dbReference type="HOGENOM" id="CLU_037682_1_0_6"/>
<dbReference type="OrthoDB" id="9808013at2"/>
<dbReference type="UniPathway" id="UPA00534">
    <property type="reaction ID" value="UER00285"/>
</dbReference>
<dbReference type="Proteomes" id="UP000000426">
    <property type="component" value="Chromosome"/>
</dbReference>
<dbReference type="GO" id="GO:0047632">
    <property type="term" value="F:agmatine deiminase activity"/>
    <property type="evidence" value="ECO:0007669"/>
    <property type="project" value="UniProtKB-UniRule"/>
</dbReference>
<dbReference type="GO" id="GO:0004668">
    <property type="term" value="F:protein-arginine deiminase activity"/>
    <property type="evidence" value="ECO:0007669"/>
    <property type="project" value="InterPro"/>
</dbReference>
<dbReference type="GO" id="GO:0033388">
    <property type="term" value="P:putrescine biosynthetic process from arginine"/>
    <property type="evidence" value="ECO:0007669"/>
    <property type="project" value="UniProtKB-UniRule"/>
</dbReference>
<dbReference type="Gene3D" id="3.75.10.10">
    <property type="entry name" value="L-arginine/glycine Amidinotransferase, Chain A"/>
    <property type="match status" value="1"/>
</dbReference>
<dbReference type="HAMAP" id="MF_01841">
    <property type="entry name" value="Agmatine_deimin"/>
    <property type="match status" value="1"/>
</dbReference>
<dbReference type="InterPro" id="IPR017754">
    <property type="entry name" value="Agmatine_deiminase"/>
</dbReference>
<dbReference type="InterPro" id="IPR007466">
    <property type="entry name" value="Peptidyl-Arg-deiminase_porph"/>
</dbReference>
<dbReference type="NCBIfam" id="TIGR03380">
    <property type="entry name" value="agmatine_aguA"/>
    <property type="match status" value="1"/>
</dbReference>
<dbReference type="NCBIfam" id="NF010070">
    <property type="entry name" value="PRK13551.1"/>
    <property type="match status" value="1"/>
</dbReference>
<dbReference type="PANTHER" id="PTHR31377">
    <property type="entry name" value="AGMATINE DEIMINASE-RELATED"/>
    <property type="match status" value="1"/>
</dbReference>
<dbReference type="PANTHER" id="PTHR31377:SF0">
    <property type="entry name" value="AGMATINE DEIMINASE-RELATED"/>
    <property type="match status" value="1"/>
</dbReference>
<dbReference type="Pfam" id="PF04371">
    <property type="entry name" value="PAD_porph"/>
    <property type="match status" value="1"/>
</dbReference>
<dbReference type="SUPFAM" id="SSF55909">
    <property type="entry name" value="Pentein"/>
    <property type="match status" value="1"/>
</dbReference>
<gene>
    <name evidence="1" type="primary">aguA</name>
    <name type="ordered locus">Psyr_4932</name>
</gene>
<accession>Q4ZLL3</accession>
<keyword id="KW-0378">Hydrolase</keyword>
<keyword id="KW-0620">Polyamine biosynthesis</keyword>
<protein>
    <recommendedName>
        <fullName evidence="1">Agmatine deiminase</fullName>
        <ecNumber evidence="1">3.5.3.12</ecNumber>
    </recommendedName>
    <alternativeName>
        <fullName evidence="1">Agmatine iminohydrolase</fullName>
    </alternativeName>
</protein>
<feature type="chain" id="PRO_1000070565" description="Agmatine deiminase">
    <location>
        <begin position="1"/>
        <end position="368"/>
    </location>
</feature>
<feature type="active site" description="Amidino-cysteine intermediate" evidence="1">
    <location>
        <position position="357"/>
    </location>
</feature>
<reference key="1">
    <citation type="journal article" date="2005" name="Proc. Natl. Acad. Sci. U.S.A.">
        <title>Comparison of the complete genome sequences of Pseudomonas syringae pv. syringae B728a and pv. tomato DC3000.</title>
        <authorList>
            <person name="Feil H."/>
            <person name="Feil W.S."/>
            <person name="Chain P."/>
            <person name="Larimer F."/>
            <person name="Dibartolo G."/>
            <person name="Copeland A."/>
            <person name="Lykidis A."/>
            <person name="Trong S."/>
            <person name="Nolan M."/>
            <person name="Goltsman E."/>
            <person name="Thiel J."/>
            <person name="Malfatti S."/>
            <person name="Loper J.E."/>
            <person name="Lapidus A."/>
            <person name="Detter J.C."/>
            <person name="Land M."/>
            <person name="Richardson P.M."/>
            <person name="Kyrpides N.C."/>
            <person name="Ivanova N."/>
            <person name="Lindow S.E."/>
        </authorList>
    </citation>
    <scope>NUCLEOTIDE SEQUENCE [LARGE SCALE GENOMIC DNA]</scope>
    <source>
        <strain>B728a</strain>
    </source>
</reference>
<comment type="function">
    <text evidence="1">Mediates the hydrolysis of agmatine into N-carbamoylputrescine in the arginine decarboxylase (ADC) pathway of putrescine biosynthesis, a basic polyamine.</text>
</comment>
<comment type="catalytic activity">
    <reaction evidence="1">
        <text>agmatine + H2O = N-carbamoylputrescine + NH4(+)</text>
        <dbReference type="Rhea" id="RHEA:18037"/>
        <dbReference type="ChEBI" id="CHEBI:15377"/>
        <dbReference type="ChEBI" id="CHEBI:28938"/>
        <dbReference type="ChEBI" id="CHEBI:58145"/>
        <dbReference type="ChEBI" id="CHEBI:58318"/>
        <dbReference type="EC" id="3.5.3.12"/>
    </reaction>
</comment>
<comment type="pathway">
    <text evidence="1">Amine and polyamine biosynthesis; putrescine biosynthesis via agmatine pathway; N-carbamoylputrescine from agmatine: step 1/1.</text>
</comment>
<comment type="subunit">
    <text evidence="1">Homodimer.</text>
</comment>
<comment type="similarity">
    <text evidence="1">Belongs to the agmatine deiminase family.</text>
</comment>
<proteinExistence type="inferred from homology"/>
<name>AGUA_PSEU2</name>
<sequence>MTTLNSTPRADGFHMPAEWAPQTQVWMVWPERPDNWRLGGKPAQAAHVAIAKAIARFEPVTVAVSAAQYDNARARLDMPNIRVVEMSSNDAWVRDSGPTFVINDRGEVRGVNWEFNAWGGFDGGLYAPWNLDSQLGGKVLEIERCPRYVTEGFVLEGGSIHVDGEGTLITTEECLLNRNRNPHLTREQIETILGDYLAVDKVIWLPEGLFNDETDGHVDNFCCYIRPGEVLLAWTDDPEDPNYSRCHAALSILENTLDAKGRAFIVHKMPIPGPLFATEEECAGVDQVHGSQERNPSVRLAGSYVNFLIVNGGIIAPSFDDPMDEKAREILQKLFPEHEVVMAPGRELLLGGGNIHCLTQQQPAPHKN</sequence>